<reference key="1">
    <citation type="journal article" date="2005" name="Science">
        <title>The transcriptional landscape of the mammalian genome.</title>
        <authorList>
            <person name="Carninci P."/>
            <person name="Kasukawa T."/>
            <person name="Katayama S."/>
            <person name="Gough J."/>
            <person name="Frith M.C."/>
            <person name="Maeda N."/>
            <person name="Oyama R."/>
            <person name="Ravasi T."/>
            <person name="Lenhard B."/>
            <person name="Wells C."/>
            <person name="Kodzius R."/>
            <person name="Shimokawa K."/>
            <person name="Bajic V.B."/>
            <person name="Brenner S.E."/>
            <person name="Batalov S."/>
            <person name="Forrest A.R."/>
            <person name="Zavolan M."/>
            <person name="Davis M.J."/>
            <person name="Wilming L.G."/>
            <person name="Aidinis V."/>
            <person name="Allen J.E."/>
            <person name="Ambesi-Impiombato A."/>
            <person name="Apweiler R."/>
            <person name="Aturaliya R.N."/>
            <person name="Bailey T.L."/>
            <person name="Bansal M."/>
            <person name="Baxter L."/>
            <person name="Beisel K.W."/>
            <person name="Bersano T."/>
            <person name="Bono H."/>
            <person name="Chalk A.M."/>
            <person name="Chiu K.P."/>
            <person name="Choudhary V."/>
            <person name="Christoffels A."/>
            <person name="Clutterbuck D.R."/>
            <person name="Crowe M.L."/>
            <person name="Dalla E."/>
            <person name="Dalrymple B.P."/>
            <person name="de Bono B."/>
            <person name="Della Gatta G."/>
            <person name="di Bernardo D."/>
            <person name="Down T."/>
            <person name="Engstrom P."/>
            <person name="Fagiolini M."/>
            <person name="Faulkner G."/>
            <person name="Fletcher C.F."/>
            <person name="Fukushima T."/>
            <person name="Furuno M."/>
            <person name="Futaki S."/>
            <person name="Gariboldi M."/>
            <person name="Georgii-Hemming P."/>
            <person name="Gingeras T.R."/>
            <person name="Gojobori T."/>
            <person name="Green R.E."/>
            <person name="Gustincich S."/>
            <person name="Harbers M."/>
            <person name="Hayashi Y."/>
            <person name="Hensch T.K."/>
            <person name="Hirokawa N."/>
            <person name="Hill D."/>
            <person name="Huminiecki L."/>
            <person name="Iacono M."/>
            <person name="Ikeo K."/>
            <person name="Iwama A."/>
            <person name="Ishikawa T."/>
            <person name="Jakt M."/>
            <person name="Kanapin A."/>
            <person name="Katoh M."/>
            <person name="Kawasawa Y."/>
            <person name="Kelso J."/>
            <person name="Kitamura H."/>
            <person name="Kitano H."/>
            <person name="Kollias G."/>
            <person name="Krishnan S.P."/>
            <person name="Kruger A."/>
            <person name="Kummerfeld S.K."/>
            <person name="Kurochkin I.V."/>
            <person name="Lareau L.F."/>
            <person name="Lazarevic D."/>
            <person name="Lipovich L."/>
            <person name="Liu J."/>
            <person name="Liuni S."/>
            <person name="McWilliam S."/>
            <person name="Madan Babu M."/>
            <person name="Madera M."/>
            <person name="Marchionni L."/>
            <person name="Matsuda H."/>
            <person name="Matsuzawa S."/>
            <person name="Miki H."/>
            <person name="Mignone F."/>
            <person name="Miyake S."/>
            <person name="Morris K."/>
            <person name="Mottagui-Tabar S."/>
            <person name="Mulder N."/>
            <person name="Nakano N."/>
            <person name="Nakauchi H."/>
            <person name="Ng P."/>
            <person name="Nilsson R."/>
            <person name="Nishiguchi S."/>
            <person name="Nishikawa S."/>
            <person name="Nori F."/>
            <person name="Ohara O."/>
            <person name="Okazaki Y."/>
            <person name="Orlando V."/>
            <person name="Pang K.C."/>
            <person name="Pavan W.J."/>
            <person name="Pavesi G."/>
            <person name="Pesole G."/>
            <person name="Petrovsky N."/>
            <person name="Piazza S."/>
            <person name="Reed J."/>
            <person name="Reid J.F."/>
            <person name="Ring B.Z."/>
            <person name="Ringwald M."/>
            <person name="Rost B."/>
            <person name="Ruan Y."/>
            <person name="Salzberg S.L."/>
            <person name="Sandelin A."/>
            <person name="Schneider C."/>
            <person name="Schoenbach C."/>
            <person name="Sekiguchi K."/>
            <person name="Semple C.A."/>
            <person name="Seno S."/>
            <person name="Sessa L."/>
            <person name="Sheng Y."/>
            <person name="Shibata Y."/>
            <person name="Shimada H."/>
            <person name="Shimada K."/>
            <person name="Silva D."/>
            <person name="Sinclair B."/>
            <person name="Sperling S."/>
            <person name="Stupka E."/>
            <person name="Sugiura K."/>
            <person name="Sultana R."/>
            <person name="Takenaka Y."/>
            <person name="Taki K."/>
            <person name="Tammoja K."/>
            <person name="Tan S.L."/>
            <person name="Tang S."/>
            <person name="Taylor M.S."/>
            <person name="Tegner J."/>
            <person name="Teichmann S.A."/>
            <person name="Ueda H.R."/>
            <person name="van Nimwegen E."/>
            <person name="Verardo R."/>
            <person name="Wei C.L."/>
            <person name="Yagi K."/>
            <person name="Yamanishi H."/>
            <person name="Zabarovsky E."/>
            <person name="Zhu S."/>
            <person name="Zimmer A."/>
            <person name="Hide W."/>
            <person name="Bult C."/>
            <person name="Grimmond S.M."/>
            <person name="Teasdale R.D."/>
            <person name="Liu E.T."/>
            <person name="Brusic V."/>
            <person name="Quackenbush J."/>
            <person name="Wahlestedt C."/>
            <person name="Mattick J.S."/>
            <person name="Hume D.A."/>
            <person name="Kai C."/>
            <person name="Sasaki D."/>
            <person name="Tomaru Y."/>
            <person name="Fukuda S."/>
            <person name="Kanamori-Katayama M."/>
            <person name="Suzuki M."/>
            <person name="Aoki J."/>
            <person name="Arakawa T."/>
            <person name="Iida J."/>
            <person name="Imamura K."/>
            <person name="Itoh M."/>
            <person name="Kato T."/>
            <person name="Kawaji H."/>
            <person name="Kawagashira N."/>
            <person name="Kawashima T."/>
            <person name="Kojima M."/>
            <person name="Kondo S."/>
            <person name="Konno H."/>
            <person name="Nakano K."/>
            <person name="Ninomiya N."/>
            <person name="Nishio T."/>
            <person name="Okada M."/>
            <person name="Plessy C."/>
            <person name="Shibata K."/>
            <person name="Shiraki T."/>
            <person name="Suzuki S."/>
            <person name="Tagami M."/>
            <person name="Waki K."/>
            <person name="Watahiki A."/>
            <person name="Okamura-Oho Y."/>
            <person name="Suzuki H."/>
            <person name="Kawai J."/>
            <person name="Hayashizaki Y."/>
        </authorList>
    </citation>
    <scope>NUCLEOTIDE SEQUENCE [LARGE SCALE MRNA] (ISOFORMS 1 AND 2)</scope>
    <source>
        <strain>C57BL/6J</strain>
        <strain>NOD</strain>
    </source>
</reference>
<reference key="2">
    <citation type="journal article" date="2009" name="PLoS Biol.">
        <title>Lineage-specific biology revealed by a finished genome assembly of the mouse.</title>
        <authorList>
            <person name="Church D.M."/>
            <person name="Goodstadt L."/>
            <person name="Hillier L.W."/>
            <person name="Zody M.C."/>
            <person name="Goldstein S."/>
            <person name="She X."/>
            <person name="Bult C.J."/>
            <person name="Agarwala R."/>
            <person name="Cherry J.L."/>
            <person name="DiCuccio M."/>
            <person name="Hlavina W."/>
            <person name="Kapustin Y."/>
            <person name="Meric P."/>
            <person name="Maglott D."/>
            <person name="Birtle Z."/>
            <person name="Marques A.C."/>
            <person name="Graves T."/>
            <person name="Zhou S."/>
            <person name="Teague B."/>
            <person name="Potamousis K."/>
            <person name="Churas C."/>
            <person name="Place M."/>
            <person name="Herschleb J."/>
            <person name="Runnheim R."/>
            <person name="Forrest D."/>
            <person name="Amos-Landgraf J."/>
            <person name="Schwartz D.C."/>
            <person name="Cheng Z."/>
            <person name="Lindblad-Toh K."/>
            <person name="Eichler E.E."/>
            <person name="Ponting C.P."/>
        </authorList>
    </citation>
    <scope>NUCLEOTIDE SEQUENCE [LARGE SCALE GENOMIC DNA]</scope>
    <source>
        <strain>C57BL/6J</strain>
    </source>
</reference>
<reference key="3">
    <citation type="journal article" date="2004" name="Genome Res.">
        <title>The status, quality, and expansion of the NIH full-length cDNA project: the Mammalian Gene Collection (MGC).</title>
        <authorList>
            <consortium name="The MGC Project Team"/>
        </authorList>
    </citation>
    <scope>NUCLEOTIDE SEQUENCE [LARGE SCALE MRNA] (ISOFORM 1)</scope>
</reference>
<reference key="4">
    <citation type="journal article" date="2001" name="Science">
        <title>Regulation of receptor fate by ubiquitination of activated beta 2-adrenergic receptor and beta-arrestin.</title>
        <authorList>
            <person name="Shenoy S.K."/>
            <person name="McDonald P.H."/>
            <person name="Kohout T.A."/>
            <person name="Lefkowitz R.J."/>
        </authorList>
    </citation>
    <scope>DISRUPTION PHENOTYPE</scope>
</reference>
<reference key="5">
    <citation type="journal article" date="2002" name="J. Biol. Chem.">
        <title>Differential nucleocytoplasmic shuttling of beta-arrestins. Characterization of a leucine-rich nuclear export signal in beta-arrestin2.</title>
        <authorList>
            <person name="Scott M.G."/>
            <person name="Le Rouzic E."/>
            <person name="Perianin A."/>
            <person name="Pierotti V."/>
            <person name="Enslen H."/>
            <person name="Benichou S."/>
            <person name="Marullo S."/>
            <person name="Benmerah A."/>
        </authorList>
    </citation>
    <scope>SUBCELLULAR LOCATION</scope>
    <scope>NUCLEOCYTOPLASMIC SHUTTLING</scope>
    <scope>MUTAGENESIS OF LEU-395</scope>
</reference>
<reference key="6">
    <citation type="journal article" date="2003" name="J. Biol. Chem.">
        <title>The adaptor protein beta-arrestin2 enhances endocytosis of the low density lipoprotein receptor.</title>
        <authorList>
            <person name="Wu J.-H."/>
            <person name="Peppel K."/>
            <person name="Nelson C.D."/>
            <person name="Lin F.-T."/>
            <person name="Kohout T.A."/>
            <person name="Miller W.E."/>
            <person name="Exum S.T."/>
            <person name="Freedman N.J."/>
        </authorList>
    </citation>
    <scope>FUNCTION IN ENDOCYTOSIS OF LDLR</scope>
    <scope>DISRUPTION PHENOTYPE</scope>
</reference>
<reference key="7">
    <citation type="journal article" date="2005" name="Cell">
        <title>An Akt/beta-arrestin 2/PP2A signaling complex mediates dopaminergic neurotransmission and behavior.</title>
        <authorList>
            <person name="Beaulieu J.-M."/>
            <person name="Sotnikova T.D."/>
            <person name="Marion S."/>
            <person name="Lefkowitz R.J."/>
            <person name="Gainetdinov R.R."/>
            <person name="Caron M.G."/>
        </authorList>
    </citation>
    <scope>FUNCTION IN AKT1 SIGNALING</scope>
    <scope>ASSOCIATION WITH PP2A</scope>
    <scope>INTERACTION WITH AKT1; GSK3A AND GSK3B</scope>
    <scope>DISRUPTION PHENOTYPE</scope>
</reference>
<reference key="8">
    <citation type="journal article" date="2007" name="J. Biol. Chem.">
        <title>The interaction of endoglin with beta-arrestin2 regulates transforming growth factor-beta-mediated ERK activation and migration in endothelial cells.</title>
        <authorList>
            <person name="Lee N.Y."/>
            <person name="Blobe G.C."/>
        </authorList>
    </citation>
    <scope>FUNCTION IN INTERNALIZATION OF ENG</scope>
    <scope>FUNCTION IN TGF-BETA-MEDIATED ERK SIGNALING</scope>
</reference>
<reference key="9">
    <citation type="journal article" date="2008" name="FASEB J.">
        <title>Beta-arrestins specifically constrain beta2-adrenergic receptor signaling and function in airway smooth muscle.</title>
        <authorList>
            <person name="Deshpande D.A."/>
            <person name="Theriot B.S."/>
            <person name="Penn R.B."/>
            <person name="Walker J.K."/>
        </authorList>
    </citation>
    <scope>FUNCTION IN BETA-ADRENERGIC RECEPTOR REGULATION</scope>
</reference>
<reference key="10">
    <citation type="journal article" date="2008" name="Immunology">
        <title>Beta2-adrenergic receptor regulates Toll-like receptor-4-induced nuclear factor-kappaB activation through beta-arrestin 2.</title>
        <authorList>
            <person name="Kizaki T."/>
            <person name="Izawa T."/>
            <person name="Sakurai T."/>
            <person name="Haga S."/>
            <person name="Taniguchi N."/>
            <person name="Tajiri H."/>
            <person name="Watanabe K."/>
            <person name="Day N.K."/>
            <person name="Toba K."/>
            <person name="Ohno H."/>
        </authorList>
    </citation>
    <scope>INTERACTION WITH CHUK</scope>
</reference>
<reference key="11">
    <citation type="journal article" date="2008" name="J. Proteome Res.">
        <title>Large-scale identification and evolution indexing of tyrosine phosphorylation sites from murine brain.</title>
        <authorList>
            <person name="Ballif B.A."/>
            <person name="Carey G.R."/>
            <person name="Sunyaev S.R."/>
            <person name="Gygi S.P."/>
        </authorList>
    </citation>
    <scope>PHOSPHORYLATION [LARGE SCALE ANALYSIS] AT TYR-48</scope>
    <scope>IDENTIFICATION BY MASS SPECTROMETRY [LARGE SCALE ANALYSIS]</scope>
    <source>
        <tissue>Brain</tissue>
    </source>
</reference>
<reference key="12">
    <citation type="journal article" date="2008" name="Nat. Immunol.">
        <title>An essential function for beta-arrestin 2 in the inhibitory signaling of natural killer cells.</title>
        <authorList>
            <person name="Yu M.-C."/>
            <person name="Su L.-L."/>
            <person name="Zou L."/>
            <person name="Liu Y."/>
            <person name="Wu N."/>
            <person name="Kong L."/>
            <person name="Zhuang Z.-H."/>
            <person name="Sun L."/>
            <person name="Liu H.P."/>
            <person name="Hu J.-H."/>
            <person name="Li D."/>
            <person name="Strominger J.L."/>
            <person name="Zang J.-W."/>
            <person name="Pei G."/>
            <person name="Ge B.-X."/>
        </authorList>
    </citation>
    <scope>FUNCTION IN REGULATION OF INNATE IMMUNE RESPONSE</scope>
    <scope>DISRUPTION PHENOTYPE</scope>
</reference>
<reference key="13">
    <citation type="journal article" date="2009" name="Nature">
        <title>Deficiency of a beta-arrestin-2 signal complex contributes to insulin resistance.</title>
        <authorList>
            <person name="Luan B."/>
            <person name="Zhao J."/>
            <person name="Wu H."/>
            <person name="Duan B."/>
            <person name="Shu G."/>
            <person name="Wang X."/>
            <person name="Li D."/>
            <person name="Jia W."/>
            <person name="Kang J."/>
            <person name="Pei G."/>
        </authorList>
    </citation>
    <scope>FUNCTION IN INSULIN SIGNALING</scope>
    <scope>INTERACTION WITH SRC; AKT1 AND INSR</scope>
    <scope>DISRUPTION PHENOTYPE</scope>
</reference>
<reference key="14">
    <citation type="journal article" date="2010" name="Cell">
        <title>A tissue-specific atlas of mouse protein phosphorylation and expression.</title>
        <authorList>
            <person name="Huttlin E.L."/>
            <person name="Jedrychowski M.P."/>
            <person name="Elias J.E."/>
            <person name="Goswami T."/>
            <person name="Rad R."/>
            <person name="Beausoleil S.A."/>
            <person name="Villen J."/>
            <person name="Haas W."/>
            <person name="Sowa M.E."/>
            <person name="Gygi S.P."/>
        </authorList>
    </citation>
    <scope>IDENTIFICATION BY MASS SPECTROMETRY [LARGE SCALE ANALYSIS]</scope>
    <source>
        <tissue>Brain</tissue>
    </source>
</reference>
<reference key="15">
    <citation type="journal article" date="2016" name="Mol. Pharmacol.">
        <title>Distinct Phosphorylation Clusters Determine the Signaling Outcome of Free Fatty Acid Receptor 4/G Protein-Coupled Receptor 120.</title>
        <authorList>
            <person name="Prihandoko R."/>
            <person name="Alvarez-Curto E."/>
            <person name="Hudson B.D."/>
            <person name="Butcher A.J."/>
            <person name="Ulven T."/>
            <person name="Miller A.M."/>
            <person name="Tobin A.B."/>
            <person name="Milligan G."/>
        </authorList>
    </citation>
    <scope>INTERACTION WITH FFAR4</scope>
</reference>
<sequence length="410" mass="46314">MGEKPGTRVFKKSSPNCKLTVYLGKRDFVDHLDKVDPVDGVVLVDPDYLKDRKVFVTLTCAFRYGREDLDVLGLSFRKDLFIATYQAFPPMPNPPRPPTRLQDRLLKKLGQHAHPFFFTIPQNLPCSVTLQPGPEDTGKACGVDFEIRAFCAKSIEEKSHKRNSVRLIIRKVQFAPETPGPQPSAETTRHFLMSDRRSLHLEASLDKELYYHGEPLNVNVHVTNNSAKTVKKIRVSVRQYADICLFSTAQYKCPVAQLEQDDQVSPSSTFCKVYTITPLLSDNREKRGLALDGQLKHEDTNLASSTIVKEGANKEVLGILVSYRVKVKLVVSRGGDVSVELPFVLMHPKPHDHITLPRPQSAPRETDVPVDTNLIEFDTNYATDDDIVFEDFARLRLKGMKDDDCDDQFC</sequence>
<keyword id="KW-0025">Alternative splicing</keyword>
<keyword id="KW-1003">Cell membrane</keyword>
<keyword id="KW-0168">Coated pit</keyword>
<keyword id="KW-0963">Cytoplasm</keyword>
<keyword id="KW-0968">Cytoplasmic vesicle</keyword>
<keyword id="KW-0379">Hydroxylation</keyword>
<keyword id="KW-0472">Membrane</keyword>
<keyword id="KW-0539">Nucleus</keyword>
<keyword id="KW-0597">Phosphoprotein</keyword>
<keyword id="KW-0653">Protein transport</keyword>
<keyword id="KW-1185">Reference proteome</keyword>
<keyword id="KW-0734">Signal transduction inhibitor</keyword>
<keyword id="KW-0813">Transport</keyword>
<keyword id="KW-0832">Ubl conjugation</keyword>
<gene>
    <name type="primary">Arrb2</name>
</gene>
<evidence type="ECO:0000250" key="1"/>
<evidence type="ECO:0000250" key="2">
    <source>
        <dbReference type="UniProtKB" id="P29067"/>
    </source>
</evidence>
<evidence type="ECO:0000250" key="3">
    <source>
        <dbReference type="UniProtKB" id="P32121"/>
    </source>
</evidence>
<evidence type="ECO:0000269" key="4">
    <source>
    </source>
</evidence>
<evidence type="ECO:0000269" key="5">
    <source>
    </source>
</evidence>
<evidence type="ECO:0000269" key="6">
    <source>
    </source>
</evidence>
<evidence type="ECO:0000269" key="7">
    <source>
    </source>
</evidence>
<evidence type="ECO:0000269" key="8">
    <source>
    </source>
</evidence>
<evidence type="ECO:0000269" key="9">
    <source>
    </source>
</evidence>
<evidence type="ECO:0000269" key="10">
    <source>
    </source>
</evidence>
<evidence type="ECO:0000269" key="11">
    <source>
    </source>
</evidence>
<evidence type="ECO:0000269" key="12">
    <source>
    </source>
</evidence>
<evidence type="ECO:0000303" key="13">
    <source>
    </source>
</evidence>
<evidence type="ECO:0000305" key="14"/>
<evidence type="ECO:0007744" key="15">
    <source>
    </source>
</evidence>
<proteinExistence type="evidence at protein level"/>
<accession>Q91YI4</accession>
<accession>Q3TCM2</accession>
<accession>Q5F2D8</accession>
<accession>Q5F2E0</accession>
<organism>
    <name type="scientific">Mus musculus</name>
    <name type="common">Mouse</name>
    <dbReference type="NCBI Taxonomy" id="10090"/>
    <lineage>
        <taxon>Eukaryota</taxon>
        <taxon>Metazoa</taxon>
        <taxon>Chordata</taxon>
        <taxon>Craniata</taxon>
        <taxon>Vertebrata</taxon>
        <taxon>Euteleostomi</taxon>
        <taxon>Mammalia</taxon>
        <taxon>Eutheria</taxon>
        <taxon>Euarchontoglires</taxon>
        <taxon>Glires</taxon>
        <taxon>Rodentia</taxon>
        <taxon>Myomorpha</taxon>
        <taxon>Muroidea</taxon>
        <taxon>Muridae</taxon>
        <taxon>Murinae</taxon>
        <taxon>Mus</taxon>
        <taxon>Mus</taxon>
    </lineage>
</organism>
<dbReference type="EMBL" id="AK154874">
    <property type="protein sequence ID" value="BAE32894.1"/>
    <property type="molecule type" value="mRNA"/>
</dbReference>
<dbReference type="EMBL" id="AK159317">
    <property type="protein sequence ID" value="BAE34984.1"/>
    <property type="molecule type" value="mRNA"/>
</dbReference>
<dbReference type="EMBL" id="AK170647">
    <property type="protein sequence ID" value="BAE41934.1"/>
    <property type="molecule type" value="mRNA"/>
</dbReference>
<dbReference type="EMBL" id="AK170889">
    <property type="protein sequence ID" value="BAE42096.1"/>
    <property type="molecule type" value="mRNA"/>
</dbReference>
<dbReference type="EMBL" id="AL596096">
    <property type="status" value="NOT_ANNOTATED_CDS"/>
    <property type="molecule type" value="Genomic_DNA"/>
</dbReference>
<dbReference type="EMBL" id="BC016642">
    <property type="protein sequence ID" value="AAH16642.1"/>
    <property type="molecule type" value="mRNA"/>
</dbReference>
<dbReference type="CCDS" id="CCDS24946.1">
    <molecule id="Q91YI4-1"/>
</dbReference>
<dbReference type="CCDS" id="CCDS70226.1">
    <molecule id="Q91YI4-2"/>
</dbReference>
<dbReference type="RefSeq" id="NP_001258287.1">
    <molecule id="Q91YI4-2"/>
    <property type="nucleotide sequence ID" value="NM_001271358.2"/>
</dbReference>
<dbReference type="RefSeq" id="NP_001258288.1">
    <molecule id="Q91YI4-2"/>
    <property type="nucleotide sequence ID" value="NM_001271359.2"/>
</dbReference>
<dbReference type="RefSeq" id="NP_001258289.1">
    <molecule id="Q91YI4-1"/>
    <property type="nucleotide sequence ID" value="NM_001271360.2"/>
</dbReference>
<dbReference type="RefSeq" id="NP_663404.1">
    <molecule id="Q91YI4-1"/>
    <property type="nucleotide sequence ID" value="NM_145429.6"/>
</dbReference>
<dbReference type="SMR" id="Q91YI4"/>
<dbReference type="BioGRID" id="229812">
    <property type="interactions" value="48"/>
</dbReference>
<dbReference type="CORUM" id="Q91YI4"/>
<dbReference type="DIP" id="DIP-36064N"/>
<dbReference type="ELM" id="Q91YI4"/>
<dbReference type="FunCoup" id="Q91YI4">
    <property type="interactions" value="3163"/>
</dbReference>
<dbReference type="IntAct" id="Q91YI4">
    <property type="interactions" value="34"/>
</dbReference>
<dbReference type="STRING" id="10090.ENSMUSP00000104208"/>
<dbReference type="iPTMnet" id="Q91YI4"/>
<dbReference type="PhosphoSitePlus" id="Q91YI4"/>
<dbReference type="SwissPalm" id="Q91YI4"/>
<dbReference type="jPOST" id="Q91YI4"/>
<dbReference type="PaxDb" id="10090-ENSMUSP00000104208"/>
<dbReference type="PeptideAtlas" id="Q91YI4"/>
<dbReference type="ProteomicsDB" id="283247">
    <molecule id="Q91YI4-1"/>
</dbReference>
<dbReference type="ProteomicsDB" id="283248">
    <molecule id="Q91YI4-2"/>
</dbReference>
<dbReference type="Pumba" id="Q91YI4"/>
<dbReference type="Antibodypedia" id="23372">
    <property type="antibodies" value="363 antibodies from 36 providers"/>
</dbReference>
<dbReference type="DNASU" id="216869"/>
<dbReference type="Ensembl" id="ENSMUST00000079056.9">
    <molecule id="Q91YI4-2"/>
    <property type="protein sequence ID" value="ENSMUSP00000078065.3"/>
    <property type="gene ID" value="ENSMUSG00000060216.16"/>
</dbReference>
<dbReference type="Ensembl" id="ENSMUST00000102563.2">
    <molecule id="Q91YI4-1"/>
    <property type="protein sequence ID" value="ENSMUSP00000099623.2"/>
    <property type="gene ID" value="ENSMUSG00000060216.16"/>
</dbReference>
<dbReference type="Ensembl" id="ENSMUST00000102564.11">
    <molecule id="Q91YI4-1"/>
    <property type="protein sequence ID" value="ENSMUSP00000099624.5"/>
    <property type="gene ID" value="ENSMUSG00000060216.16"/>
</dbReference>
<dbReference type="Ensembl" id="ENSMUST00000108568.10">
    <molecule id="Q91YI4-2"/>
    <property type="protein sequence ID" value="ENSMUSP00000104208.4"/>
    <property type="gene ID" value="ENSMUSG00000060216.16"/>
</dbReference>
<dbReference type="GeneID" id="216869"/>
<dbReference type="KEGG" id="mmu:216869"/>
<dbReference type="UCSC" id="uc007jur.2">
    <molecule id="Q91YI4-1"/>
    <property type="organism name" value="mouse"/>
</dbReference>
<dbReference type="AGR" id="MGI:99474"/>
<dbReference type="CTD" id="409"/>
<dbReference type="MGI" id="MGI:99474">
    <property type="gene designation" value="Arrb2"/>
</dbReference>
<dbReference type="VEuPathDB" id="HostDB:ENSMUSG00000060216"/>
<dbReference type="eggNOG" id="KOG3865">
    <property type="taxonomic scope" value="Eukaryota"/>
</dbReference>
<dbReference type="GeneTree" id="ENSGT00950000182887"/>
<dbReference type="HOGENOM" id="CLU_033484_1_1_1"/>
<dbReference type="InParanoid" id="Q91YI4"/>
<dbReference type="OMA" id="TSRHFLM"/>
<dbReference type="OrthoDB" id="298939at2759"/>
<dbReference type="PhylomeDB" id="Q91YI4"/>
<dbReference type="TreeFam" id="TF314260"/>
<dbReference type="Reactome" id="R-MMU-418555">
    <property type="pathway name" value="G alpha (s) signalling events"/>
</dbReference>
<dbReference type="Reactome" id="R-MMU-456926">
    <property type="pathway name" value="Thrombin signalling through proteinase activated receptors (PARs)"/>
</dbReference>
<dbReference type="Reactome" id="R-MMU-5099900">
    <property type="pathway name" value="WNT5A-dependent internalization of FZD4"/>
</dbReference>
<dbReference type="Reactome" id="R-MMU-5635838">
    <property type="pathway name" value="Activation of SMO"/>
</dbReference>
<dbReference type="Reactome" id="R-MMU-5674135">
    <property type="pathway name" value="MAP2K and MAPK activation"/>
</dbReference>
<dbReference type="Reactome" id="R-MMU-5689880">
    <property type="pathway name" value="Ub-specific processing proteases"/>
</dbReference>
<dbReference type="Reactome" id="R-MMU-8856825">
    <property type="pathway name" value="Cargo recognition for clathrin-mediated endocytosis"/>
</dbReference>
<dbReference type="Reactome" id="R-MMU-8856828">
    <property type="pathway name" value="Clathrin-mediated endocytosis"/>
</dbReference>
<dbReference type="Reactome" id="R-MMU-9839389">
    <property type="pathway name" value="TGFBR3 regulates TGF-beta signaling"/>
</dbReference>
<dbReference type="BioGRID-ORCS" id="216869">
    <property type="hits" value="2 hits in 79 CRISPR screens"/>
</dbReference>
<dbReference type="ChiTaRS" id="Arrb2">
    <property type="organism name" value="mouse"/>
</dbReference>
<dbReference type="PRO" id="PR:Q91YI4"/>
<dbReference type="Proteomes" id="UP000000589">
    <property type="component" value="Chromosome 11"/>
</dbReference>
<dbReference type="RNAct" id="Q91YI4">
    <property type="molecule type" value="protein"/>
</dbReference>
<dbReference type="Bgee" id="ENSMUSG00000060216">
    <property type="expression patterns" value="Expressed in granulocyte and 247 other cell types or tissues"/>
</dbReference>
<dbReference type="ExpressionAtlas" id="Q91YI4">
    <property type="expression patterns" value="baseline and differential"/>
</dbReference>
<dbReference type="GO" id="GO:0005905">
    <property type="term" value="C:clathrin-coated pit"/>
    <property type="evidence" value="ECO:0007669"/>
    <property type="project" value="UniProtKB-SubCell"/>
</dbReference>
<dbReference type="GO" id="GO:0005737">
    <property type="term" value="C:cytoplasm"/>
    <property type="evidence" value="ECO:0000250"/>
    <property type="project" value="UniProtKB"/>
</dbReference>
<dbReference type="GO" id="GO:0005829">
    <property type="term" value="C:cytosol"/>
    <property type="evidence" value="ECO:0000304"/>
    <property type="project" value="Reactome"/>
</dbReference>
<dbReference type="GO" id="GO:0030139">
    <property type="term" value="C:endocytic vesicle"/>
    <property type="evidence" value="ECO:0000250"/>
    <property type="project" value="UniProtKB"/>
</dbReference>
<dbReference type="GO" id="GO:0098978">
    <property type="term" value="C:glutamatergic synapse"/>
    <property type="evidence" value="ECO:0000314"/>
    <property type="project" value="SynGO"/>
</dbReference>
<dbReference type="GO" id="GO:0005654">
    <property type="term" value="C:nucleoplasm"/>
    <property type="evidence" value="ECO:0007669"/>
    <property type="project" value="Ensembl"/>
</dbReference>
<dbReference type="GO" id="GO:0005886">
    <property type="term" value="C:plasma membrane"/>
    <property type="evidence" value="ECO:0007669"/>
    <property type="project" value="UniProtKB-SubCell"/>
</dbReference>
<dbReference type="GO" id="GO:0031701">
    <property type="term" value="F:angiotensin receptor binding"/>
    <property type="evidence" value="ECO:0007669"/>
    <property type="project" value="Ensembl"/>
</dbReference>
<dbReference type="GO" id="GO:0031748">
    <property type="term" value="F:D1 dopamine receptor binding"/>
    <property type="evidence" value="ECO:0007669"/>
    <property type="project" value="Ensembl"/>
</dbReference>
<dbReference type="GO" id="GO:0060090">
    <property type="term" value="F:molecular adaptor activity"/>
    <property type="evidence" value="ECO:0007669"/>
    <property type="project" value="Ensembl"/>
</dbReference>
<dbReference type="GO" id="GO:0043422">
    <property type="term" value="F:protein kinase B binding"/>
    <property type="evidence" value="ECO:0000353"/>
    <property type="project" value="UniProtKB"/>
</dbReference>
<dbReference type="GO" id="GO:0031625">
    <property type="term" value="F:ubiquitin protein ligase binding"/>
    <property type="evidence" value="ECO:0007669"/>
    <property type="project" value="Ensembl"/>
</dbReference>
<dbReference type="GO" id="GO:0007628">
    <property type="term" value="P:adult walking behavior"/>
    <property type="evidence" value="ECO:0000315"/>
    <property type="project" value="UniProtKB"/>
</dbReference>
<dbReference type="GO" id="GO:0060326">
    <property type="term" value="P:cell chemotaxis"/>
    <property type="evidence" value="ECO:0007669"/>
    <property type="project" value="Ensembl"/>
</dbReference>
<dbReference type="GO" id="GO:0002031">
    <property type="term" value="P:G protein-coupled receptor internalization"/>
    <property type="evidence" value="ECO:0007669"/>
    <property type="project" value="Ensembl"/>
</dbReference>
<dbReference type="GO" id="GO:0050804">
    <property type="term" value="P:modulation of chemical synaptic transmission"/>
    <property type="evidence" value="ECO:0000314"/>
    <property type="project" value="SynGO"/>
</dbReference>
<dbReference type="GO" id="GO:0043124">
    <property type="term" value="P:negative regulation of canonical NF-kappaB signal transduction"/>
    <property type="evidence" value="ECO:0007669"/>
    <property type="project" value="Ensembl"/>
</dbReference>
<dbReference type="GO" id="GO:0032691">
    <property type="term" value="P:negative regulation of interleukin-1 beta production"/>
    <property type="evidence" value="ECO:0000315"/>
    <property type="project" value="UniProtKB"/>
</dbReference>
<dbReference type="GO" id="GO:0032695">
    <property type="term" value="P:negative regulation of interleukin-12 production"/>
    <property type="evidence" value="ECO:0000315"/>
    <property type="project" value="UniProtKB"/>
</dbReference>
<dbReference type="GO" id="GO:0032715">
    <property type="term" value="P:negative regulation of interleukin-6 production"/>
    <property type="evidence" value="ECO:0000315"/>
    <property type="project" value="UniProtKB"/>
</dbReference>
<dbReference type="GO" id="GO:0045953">
    <property type="term" value="P:negative regulation of natural killer cell mediated cytotoxicity"/>
    <property type="evidence" value="ECO:0007669"/>
    <property type="project" value="Ensembl"/>
</dbReference>
<dbReference type="GO" id="GO:0031397">
    <property type="term" value="P:negative regulation of protein ubiquitination"/>
    <property type="evidence" value="ECO:0007669"/>
    <property type="project" value="Ensembl"/>
</dbReference>
<dbReference type="GO" id="GO:0034122">
    <property type="term" value="P:negative regulation of toll-like receptor signaling pathway"/>
    <property type="evidence" value="ECO:0000315"/>
    <property type="project" value="UniProtKB"/>
</dbReference>
<dbReference type="GO" id="GO:0032720">
    <property type="term" value="P:negative regulation of tumor necrosis factor production"/>
    <property type="evidence" value="ECO:0000315"/>
    <property type="project" value="UniProtKB"/>
</dbReference>
<dbReference type="GO" id="GO:2000727">
    <property type="term" value="P:positive regulation of cardiac muscle cell differentiation"/>
    <property type="evidence" value="ECO:0000314"/>
    <property type="project" value="BHF-UCL"/>
</dbReference>
<dbReference type="GO" id="GO:0070374">
    <property type="term" value="P:positive regulation of ERK1 and ERK2 cascade"/>
    <property type="evidence" value="ECO:0007669"/>
    <property type="project" value="Ensembl"/>
</dbReference>
<dbReference type="GO" id="GO:0010628">
    <property type="term" value="P:positive regulation of gene expression"/>
    <property type="evidence" value="ECO:0000314"/>
    <property type="project" value="BHF-UCL"/>
</dbReference>
<dbReference type="GO" id="GO:0051897">
    <property type="term" value="P:positive regulation of phosphatidylinositol 3-kinase/protein kinase B signal transduction"/>
    <property type="evidence" value="ECO:0000315"/>
    <property type="project" value="UniProtKB"/>
</dbReference>
<dbReference type="GO" id="GO:0002092">
    <property type="term" value="P:positive regulation of receptor internalization"/>
    <property type="evidence" value="ECO:0000250"/>
    <property type="project" value="UniProtKB"/>
</dbReference>
<dbReference type="GO" id="GO:0032226">
    <property type="term" value="P:positive regulation of synaptic transmission, dopaminergic"/>
    <property type="evidence" value="ECO:0000315"/>
    <property type="project" value="UniProtKB"/>
</dbReference>
<dbReference type="GO" id="GO:0098926">
    <property type="term" value="P:postsynaptic signal transduction"/>
    <property type="evidence" value="ECO:0000314"/>
    <property type="project" value="SynGO"/>
</dbReference>
<dbReference type="GO" id="GO:0043161">
    <property type="term" value="P:proteasome-mediated ubiquitin-dependent protein catabolic process"/>
    <property type="evidence" value="ECO:0007669"/>
    <property type="project" value="Ensembl"/>
</dbReference>
<dbReference type="GO" id="GO:0015031">
    <property type="term" value="P:protein transport"/>
    <property type="evidence" value="ECO:0007669"/>
    <property type="project" value="UniProtKB-KW"/>
</dbReference>
<dbReference type="GO" id="GO:0016567">
    <property type="term" value="P:protein ubiquitination"/>
    <property type="evidence" value="ECO:0007669"/>
    <property type="project" value="Ensembl"/>
</dbReference>
<dbReference type="GO" id="GO:0008277">
    <property type="term" value="P:regulation of G protein-coupled receptor signaling pathway"/>
    <property type="evidence" value="ECO:0000315"/>
    <property type="project" value="MGI"/>
</dbReference>
<dbReference type="GO" id="GO:0006366">
    <property type="term" value="P:transcription by RNA polymerase II"/>
    <property type="evidence" value="ECO:0007669"/>
    <property type="project" value="Ensembl"/>
</dbReference>
<dbReference type="GO" id="GO:0007179">
    <property type="term" value="P:transforming growth factor beta receptor signaling pathway"/>
    <property type="evidence" value="ECO:0007669"/>
    <property type="project" value="Ensembl"/>
</dbReference>
<dbReference type="FunFam" id="2.60.40.640:FF:000003">
    <property type="entry name" value="beta-arrestin-1 isoform X1"/>
    <property type="match status" value="1"/>
</dbReference>
<dbReference type="FunFam" id="2.60.40.840:FF:000001">
    <property type="entry name" value="beta-arrestin-1 isoform X1"/>
    <property type="match status" value="1"/>
</dbReference>
<dbReference type="Gene3D" id="2.60.40.640">
    <property type="match status" value="1"/>
</dbReference>
<dbReference type="Gene3D" id="2.60.40.840">
    <property type="match status" value="1"/>
</dbReference>
<dbReference type="InterPro" id="IPR000698">
    <property type="entry name" value="Arrestin"/>
</dbReference>
<dbReference type="InterPro" id="IPR014752">
    <property type="entry name" value="Arrestin-like_C"/>
</dbReference>
<dbReference type="InterPro" id="IPR011021">
    <property type="entry name" value="Arrestin-like_N"/>
</dbReference>
<dbReference type="InterPro" id="IPR011022">
    <property type="entry name" value="Arrestin_C-like"/>
</dbReference>
<dbReference type="InterPro" id="IPR017864">
    <property type="entry name" value="Arrestin_CS"/>
</dbReference>
<dbReference type="InterPro" id="IPR014753">
    <property type="entry name" value="Arrestin_N"/>
</dbReference>
<dbReference type="InterPro" id="IPR014756">
    <property type="entry name" value="Ig_E-set"/>
</dbReference>
<dbReference type="PANTHER" id="PTHR11792">
    <property type="entry name" value="ARRESTIN"/>
    <property type="match status" value="1"/>
</dbReference>
<dbReference type="PANTHER" id="PTHR11792:SF20">
    <property type="entry name" value="BETA-ARRESTIN-2"/>
    <property type="match status" value="1"/>
</dbReference>
<dbReference type="Pfam" id="PF02752">
    <property type="entry name" value="Arrestin_C"/>
    <property type="match status" value="1"/>
</dbReference>
<dbReference type="Pfam" id="PF00339">
    <property type="entry name" value="Arrestin_N"/>
    <property type="match status" value="1"/>
</dbReference>
<dbReference type="PRINTS" id="PR00309">
    <property type="entry name" value="ARRESTIN"/>
</dbReference>
<dbReference type="SMART" id="SM01017">
    <property type="entry name" value="Arrestin_C"/>
    <property type="match status" value="1"/>
</dbReference>
<dbReference type="SUPFAM" id="SSF81296">
    <property type="entry name" value="E set domains"/>
    <property type="match status" value="2"/>
</dbReference>
<dbReference type="PROSITE" id="PS00295">
    <property type="entry name" value="ARRESTINS"/>
    <property type="match status" value="1"/>
</dbReference>
<comment type="function">
    <text evidence="1 3 6 7 8 9 10 11">Functions in regulating agonist-mediated G-protein coupled receptor (GPCR) signaling by mediating both receptor desensitization and resensitization processes. During homologous desensitization, beta-arrestins bind to the GPRK-phosphorylated receptor and sterically preclude its coupling to the cognate G-protein; the binding appears to require additional receptor determinants exposed only in the active receptor conformation. The beta-arrestins target many receptors for internalization by acting as endocytic adapters (CLASPs, clathrin-associated sorting proteins) and recruiting the GPRCs to the adapter protein 2 complex 2 (AP-2) in clathrin-coated pits (CCPs). However, the extent of beta-arrestin involvement appears to vary significantly depending on the receptor, agonist and cell type. Internalized arrestin-receptor complexes traffic to intracellular endosomes, where they remain uncoupled from G-proteins. Two different modes of arrestin-mediated internalization occur. Class A receptors, like ADRB2, OPRM1, ENDRA, D1AR and ADRA1B dissociate from beta-arrestin at or near the plasma membrane and undergo rapid recycling. Class B receptors, like AVPR2, AGTR1, NTSR1, TRHR and TACR1 internalize as a complex with arrestin and traffic with it to endosomal vesicles, presumably as desensitized receptors, for extended periods of time. Receptor resensitization then requires that receptor-bound arrestin is removed so that the receptor can be dephosphorylated and returned to the plasma membrane. Mediates endocytosis of CCR7 following ligation of CCL19 but not CCL21. Involved in internalization of P2RY1, P2RY4, P2RY6 and P2RY11 and ATP-stimulated internalization of P2RY2. Involved in phosphorylation-dependent internalization of OPRD1 and subsequent recycling or degradation. Involved in ubiquitination of IGF1R. Beta-arrestins function as multivalent adapter proteins that can switch the GPCR from a G-protein signaling mode that transmits short-lived signals from the plasma membrane via small molecule second messengers and ion channels to a beta-arrestin signaling mode that transmits a distinct set of signals that are initiated as the receptor internalizes and transits the intracellular compartment. Acts as a signaling scaffold for MAPK pathways such as MAPK1/3 (ERK1/2) and MAPK10 (JNK3). ERK1/2 and JNK3 activated by the beta-arrestin scaffold are largely excluded from the nucleus and confined to cytoplasmic locations such as endocytic vesicles, also called beta-arrestin signalosomes. Acts as a signaling scaffold for the AKT1 pathway. GPCRs for which the beta-arrestin-mediated signaling relies on both ARRB1 and ARRB2 (codependent regulation) include ADRB2, F2RL1 and PTH1R. For some GPCRs the beta-arrestin-mediated signaling relies on either ARRB1 or ARRB2 and is inhibited by the other respective beta-arrestin form (reciprocal regulation). Increases ERK1/2 signaling in AGTR1- and AVPR2-mediated activation (reciprocal regulation). Involved in CCR7-mediated ERK1/2 signaling involving ligand CCL19. Is involved in type-1A angiotensin II receptor/AGTR1-mediated ERK activity. Is involved in type-1A angiotensin II receptor/AGTR1-mediated MAPK10 activity. Is involved in dopamine-stimulated AKT1 activity in the striatum by disrupting the association of AKT1 with its negative regulator PP2A. Involved in AGTR1-mediated chemotaxis. Appears to function as signaling scaffold involved in regulation of MIP-1-beta-stimulated CCR5-dependent chemotaxis. Involved in attenuation of NF-kappa-B-dependent transcription in response to GPCR or cytokine stimulation by interacting with and stabilizing CHUK. Suppresses UV-induced NF-kappa-B-dependent activation by interacting with CHUK. The function is promoted by stimulation of ADRB2 and dephosphorylation of ARRB2. Involved in IL8-mediated granule release in neutrophils (By similarity). Involved in p53/TP53-mediated apoptosis by regulating MDM2 and reducing the MDM2-mediated degradation of p53/TP53. May serve as nuclear messenger for GPCRs. Upon stimulation of OR1D2, may be involved in regulation of gene expression during the early processes of fertilization. Also involved in regulation of receptors other than GPCRs. Involved in endocytosis of TGFBR2 and TGFBR3 and down-regulates TGF-beta signaling such as NF-kappa-B activation. Involved in endocytosis of low-density lipoprotein receptor/LDLR. Involved in endocytosis of smoothened homolog/Smo, which also requires GRK2. Involved in endocytosis of SLC9A5. Involved in endocytosis of ENG and subsequent TGF-beta-mediated ERK activation and migration of epithelial cells. Involved in Toll-like receptor and IL-1 receptor signaling through the interaction with TRAF6 which prevents TRAF6 autoubiquitination and oligomerization required for activation of NF-kappa-B and JUN. Involved in insulin resistance by acting as insulin-induced signaling scaffold for SRC, AKT1 and INSR. Involved in regulation of inhibitory signaling of natural killer cells by recruiting PTPN6 and PTPN11 to KIR2DL1. Involved in the internalization of the atypical chemokine receptor ACKR3 (By similarity). Acts as an adapter protein coupling FFAR4 receptor to specific downstream signaling pathways, as well as mediating receptor endocytosis. During the activation step of NLRP3 inflammasome, directly associates with NLRP3 leading to inhibition of pro-inflammatory cytokine release and inhibition of inflammation.</text>
</comment>
<comment type="subunit">
    <text evidence="1 3 12 14">Homooligomer; the self-association is mediated by InsP6-binding (Probable). Heterooligomer with ARRB1; the association is mediated by InsP6-binding. Interacts with ADRB2 and CHRM2. Interacts with PDE4A. Interacts with PDE4D. Interacts with MAPK10, MAPK1 and MAPK3. Interacts with DRD2. Interacts with FSHR. Interacts with CLTC. Interacts with HTR2C. Interacts with CCR5. Interacts with CXCR4. Interacts with SRC. Interacts with DUSP16; the interaction is interrupted by stimulation of AGTR1 and activation of MAPK10. Interacts with CHUK; the interaction is enhanced stimulation of ADRB2. Interacts with RELA. Interacts with MDM2; the interaction is enhanced by activation of GPCRs. Interacts with SLC9A5. Interacts with TRAF6. Interacts with IGF1R. Interacts with ENG. Interacts with ARRB2. Interacts with KIR2DL1, KIR2DL3 and KIR2DL4. Interacts with LDLR. Interacts with AP2B1. Interacts with C5AR1. Interacts with RAF1. Interacts with MAP2K1. Interacts with MAPK1. Interacts with MAPK10; the interaction enhances MAPK10 activation by MAP3K5. Interacts with MAP2K4; the interaction is enhanced by presence of MAP3K5 and MAPK10. Interacts with MAP3K5. Interacts with AKT1. Interacts with IKBKB and MAP3K14. Interacts with SMO (activated). Interacts with GSK3A and GSK3B. Interacts with CXCR4; the interaction is dependent on C-terminal phosphorylation of CXCR4 and allows activation of MAPK1 and MAPK3. Interacts with GPR143. Interacts with HCK and CXCR1 (phosphorylated) (By similarity). Associates with protein phosphatase 2A (PP2A). Interacts with ACKR3 and ACKR4 (By similarity). Interacts with ARRDC1; the interaction is direct (By similarity). Interacts with GPR61, GPR62 and GPR135 (By similarity). Interacts (via NACHT and LRR domains) with NLRP3; this interaction is direct and inducible by omega-3 polyunsaturated fatty acids (PUFAs) (By similarity). Interacts with FFAR4 (via C-terminus); this interaction is stimulated by long-chain fatty acids (LCFAs) (PubMed:26873857). Interacts with GPR35 (By similarity). Interacts with GPR84 (By similarity). Interacts with TIGIT; this interaction inhibits the NF-kappa-B pathway (By similarity). Interacts with TGFBR3 (By similarity).</text>
</comment>
<comment type="interaction">
    <interactant intactId="EBI-994161">
        <id>Q91YI4</id>
    </interactant>
    <interactant intactId="EBI-8344379">
        <id>P58660</id>
        <label>Card10</label>
    </interactant>
    <organismsDiffer>false</organismsDiffer>
    <experiments>7</experiments>
</comment>
<comment type="interaction">
    <interactant intactId="EBI-994161">
        <id>Q91YI4</id>
    </interactant>
    <interactant intactId="EBI-2912413">
        <id>Q7TMA4</id>
        <label>Ffar4</label>
    </interactant>
    <organismsDiffer>false</organismsDiffer>
    <experiments>4</experiments>
</comment>
<comment type="subcellular location">
    <subcellularLocation>
        <location evidence="5">Cytoplasm</location>
    </subcellularLocation>
    <subcellularLocation>
        <location evidence="5">Nucleus</location>
    </subcellularLocation>
    <subcellularLocation>
        <location evidence="5">Cell membrane</location>
    </subcellularLocation>
    <subcellularLocation>
        <location evidence="1">Membrane</location>
        <location evidence="1">Clathrin-coated pit</location>
    </subcellularLocation>
    <subcellularLocation>
        <location evidence="1">Cytoplasmic vesicle</location>
    </subcellularLocation>
    <text>Translocates to the plasma membrane and colocalizes with antagonist-stimulated GPCRs.</text>
</comment>
<comment type="alternative products">
    <event type="alternative splicing"/>
    <isoform>
        <id>Q91YI4-1</id>
        <name>1</name>
        <sequence type="displayed"/>
    </isoform>
    <isoform>
        <id>Q91YI4-2</id>
        <name>2</name>
        <sequence type="described" ref="VSP_020652"/>
    </isoform>
</comment>
<comment type="tissue specificity">
    <text>Predominantly localized in neuronal tissues and in the spleen.</text>
</comment>
<comment type="PTM">
    <text evidence="1">Phosphorylated at Thr-383 in the cytoplasm; probably dephosphorylated at the plasma membrane. The phosphorylation does not regulate internalization and recycling of ADRB2, interaction with clathrin or AP2B1 (By similarity).</text>
</comment>
<comment type="PTM">
    <text evidence="3">The ubiquitination status appears to regulate the formation and trafficking of beta-arrestin-GPCR complexes and signaling. Ubiquitination appears to occur GPCR-specific. Ubiquitinated by MDM2; the ubiquitination is required for rapid internalization of ADRB2. Deubiquitinated by USP33; the deubiquitination leads to a dissociation of the beta-arrestin-GPCR complex. Stimulation of a class A GPCR, such as ADRB2, induces transient ubiquitination and subsequently promotes association with USP33. Stimulation of a class B GPCR promotes a sustained ubiquitination. Deubiquitinated by USP20; allowing USP20 to deubiquitinate TRAF6 leading to inhibition of NF-kappa-B signaling (By similarity).</text>
</comment>
<comment type="PTM">
    <text evidence="1">Hydroxylation by PHD2 modulates the rate of internalization by slowing down recruitment to the plasma membrane and inhibiting subsequent co-internalization with class A receptors.</text>
</comment>
<comment type="disruption phenotype">
    <text evidence="4 6 7 10 11">Loss of beta-2 adrenergic receptor/ADRB2 ubiquitination. Reduction of dopamine-dependent behaviors, loss of Akt1 regulation by dopamine in the striatum and disruption of the dopamine-dependent interaction of Akt1 with its negative regulator, protein phosphatase 2A. Increased serum LDL-cholesterol levels upon high fat diet. Exacerbates insulin resistance. Elevated cytotoxicity of natural killer cells and lowered susceptibility to mouse cytomegalovirus infection.</text>
</comment>
<comment type="similarity">
    <text evidence="14">Belongs to the arrestin family.</text>
</comment>
<feature type="chain" id="PRO_0000205200" description="Beta-arrestin-2">
    <location>
        <begin position="1"/>
        <end position="410"/>
    </location>
</feature>
<feature type="region of interest" description="Interaction with TRAF6" evidence="1">
    <location>
        <begin position="241"/>
        <end position="410"/>
    </location>
</feature>
<feature type="region of interest" description="Interaction with AP2B1" evidence="1">
    <location>
        <begin position="364"/>
        <end position="410"/>
    </location>
</feature>
<feature type="short sequence motif" description="[DE]-X(1,2)-F-X-X-[FL]-X-X-X-R motif" evidence="1">
    <location>
        <begin position="386"/>
        <end position="396"/>
    </location>
</feature>
<feature type="modified residue" description="Phosphotyrosine" evidence="15">
    <location>
        <position position="48"/>
    </location>
</feature>
<feature type="modified residue" description="Hydroxyproline; by PHD2" evidence="1">
    <location>
        <position position="176"/>
    </location>
</feature>
<feature type="modified residue" description="Hydroxyproline; by PHD2" evidence="1">
    <location>
        <position position="181"/>
    </location>
</feature>
<feature type="modified residue" description="Phosphoserine" evidence="2">
    <location>
        <position position="361"/>
    </location>
</feature>
<feature type="modified residue" description="Phosphothreonine" evidence="2">
    <location>
        <position position="383"/>
    </location>
</feature>
<feature type="splice variant" id="VSP_020652" description="In isoform 2." evidence="13">
    <original>Q</original>
    <variation>QSAPIHPPLLCP</variation>
    <location>
        <position position="360"/>
    </location>
</feature>
<feature type="mutagenesis site" description="Nuclear localization. Causes nuclear relocalization of MAPK10." evidence="5">
    <original>L</original>
    <variation>A</variation>
    <location>
        <position position="395"/>
    </location>
</feature>
<feature type="sequence conflict" description="In Ref. 1; BAE41934." evidence="14" ref="1">
    <original>K</original>
    <variation>R</variation>
    <location>
        <position position="11"/>
    </location>
</feature>
<feature type="sequence conflict" description="In Ref. 1; BAE41934." evidence="14" ref="1">
    <original>T</original>
    <variation>N</variation>
    <location>
        <position position="59"/>
    </location>
</feature>
<feature type="sequence conflict" description="In Ref. 1; BAE41934." evidence="14" ref="1">
    <original>S</original>
    <variation>Y</variation>
    <location>
        <position position="75"/>
    </location>
</feature>
<name>ARRB2_MOUSE</name>
<protein>
    <recommendedName>
        <fullName>Beta-arrestin-2</fullName>
    </recommendedName>
    <alternativeName>
        <fullName>Arrestin beta-2</fullName>
    </alternativeName>
</protein>